<accession>P60661</accession>
<accession>A5PJX9</accession>
<accession>P16475</accession>
<accession>P24572</accession>
<accession>P24573</accession>
<accession>Q12790</accession>
<accession>Q3SYR6</accession>
<proteinExistence type="evidence at transcript level"/>
<keyword id="KW-0007">Acetylation</keyword>
<keyword id="KW-0025">Alternative splicing</keyword>
<keyword id="KW-0505">Motor protein</keyword>
<keyword id="KW-0514">Muscle protein</keyword>
<keyword id="KW-0518">Myosin</keyword>
<keyword id="KW-0597">Phosphoprotein</keyword>
<keyword id="KW-1185">Reference proteome</keyword>
<keyword id="KW-0677">Repeat</keyword>
<gene>
    <name type="primary">MYL6</name>
</gene>
<dbReference type="EMBL" id="X54977">
    <property type="protein sequence ID" value="CAA38721.1"/>
    <property type="molecule type" value="mRNA"/>
</dbReference>
<dbReference type="EMBL" id="X54978">
    <property type="protein sequence ID" value="CAA38722.1"/>
    <property type="molecule type" value="mRNA"/>
</dbReference>
<dbReference type="EMBL" id="BC103428">
    <property type="protein sequence ID" value="AAI03429.1"/>
    <property type="molecule type" value="mRNA"/>
</dbReference>
<dbReference type="EMBL" id="BC142278">
    <property type="protein sequence ID" value="AAI42279.1"/>
    <property type="molecule type" value="mRNA"/>
</dbReference>
<dbReference type="PIR" id="S13671">
    <property type="entry name" value="S13671"/>
</dbReference>
<dbReference type="PIR" id="S13672">
    <property type="entry name" value="S13672"/>
</dbReference>
<dbReference type="RefSeq" id="NP_786974.1">
    <molecule id="P60661-1"/>
    <property type="nucleotide sequence ID" value="NM_175780.1"/>
</dbReference>
<dbReference type="RefSeq" id="XP_005206559.1">
    <molecule id="P60661-2"/>
    <property type="nucleotide sequence ID" value="XM_005206502.5"/>
</dbReference>
<dbReference type="SMR" id="P60661"/>
<dbReference type="FunCoup" id="P60661">
    <property type="interactions" value="1721"/>
</dbReference>
<dbReference type="STRING" id="9913.ENSBTAP00000014304"/>
<dbReference type="PaxDb" id="9913-ENSBTAP00000014304"/>
<dbReference type="PeptideAtlas" id="P60661"/>
<dbReference type="Ensembl" id="ENSBTAT00000014304.6">
    <molecule id="P60661-1"/>
    <property type="protein sequence ID" value="ENSBTAP00000014304.4"/>
    <property type="gene ID" value="ENSBTAG00000010799.7"/>
</dbReference>
<dbReference type="GeneID" id="281341"/>
<dbReference type="KEGG" id="bta:281341"/>
<dbReference type="CTD" id="4637"/>
<dbReference type="VEuPathDB" id="HostDB:ENSBTAG00000010799"/>
<dbReference type="eggNOG" id="KOG0030">
    <property type="taxonomic scope" value="Eukaryota"/>
</dbReference>
<dbReference type="GeneTree" id="ENSGT01030000234570"/>
<dbReference type="HOGENOM" id="CLU_061288_13_0_1"/>
<dbReference type="InParanoid" id="P60661"/>
<dbReference type="OMA" id="HDQASTN"/>
<dbReference type="OrthoDB" id="5959761at2759"/>
<dbReference type="TreeFam" id="TF351553"/>
<dbReference type="Reactome" id="R-BTA-445355">
    <property type="pathway name" value="Smooth Muscle Contraction"/>
</dbReference>
<dbReference type="Reactome" id="R-BTA-5627123">
    <property type="pathway name" value="RHO GTPases activate PAKs"/>
</dbReference>
<dbReference type="Proteomes" id="UP000009136">
    <property type="component" value="Chromosome 5"/>
</dbReference>
<dbReference type="Bgee" id="ENSBTAG00000010799">
    <property type="expression patterns" value="Expressed in aorta and 105 other cell types or tissues"/>
</dbReference>
<dbReference type="GO" id="GO:0005903">
    <property type="term" value="C:brush border"/>
    <property type="evidence" value="ECO:0007669"/>
    <property type="project" value="Ensembl"/>
</dbReference>
<dbReference type="GO" id="GO:0005829">
    <property type="term" value="C:cytosol"/>
    <property type="evidence" value="ECO:0000304"/>
    <property type="project" value="Reactome"/>
</dbReference>
<dbReference type="GO" id="GO:0016460">
    <property type="term" value="C:myosin II complex"/>
    <property type="evidence" value="ECO:0000318"/>
    <property type="project" value="GO_Central"/>
</dbReference>
<dbReference type="GO" id="GO:0016461">
    <property type="term" value="C:unconventional myosin complex"/>
    <property type="evidence" value="ECO:0007669"/>
    <property type="project" value="Ensembl"/>
</dbReference>
<dbReference type="GO" id="GO:0005509">
    <property type="term" value="F:calcium ion binding"/>
    <property type="evidence" value="ECO:0007669"/>
    <property type="project" value="InterPro"/>
</dbReference>
<dbReference type="GO" id="GO:0000146">
    <property type="term" value="F:microfilament motor activity"/>
    <property type="evidence" value="ECO:0000250"/>
    <property type="project" value="HGNC-UCL"/>
</dbReference>
<dbReference type="GO" id="GO:0008307">
    <property type="term" value="F:structural constituent of muscle"/>
    <property type="evidence" value="ECO:0000250"/>
    <property type="project" value="HGNC-UCL"/>
</dbReference>
<dbReference type="CDD" id="cd00051">
    <property type="entry name" value="EFh"/>
    <property type="match status" value="1"/>
</dbReference>
<dbReference type="FunFam" id="1.10.238.10:FF:000019">
    <property type="entry name" value="Myosin light chain 1 skeletal"/>
    <property type="match status" value="1"/>
</dbReference>
<dbReference type="FunFam" id="1.10.238.10:FF:000056">
    <property type="entry name" value="Myosin light chain 1 skeletal"/>
    <property type="match status" value="1"/>
</dbReference>
<dbReference type="Gene3D" id="1.10.238.10">
    <property type="entry name" value="EF-hand"/>
    <property type="match status" value="2"/>
</dbReference>
<dbReference type="InterPro" id="IPR050230">
    <property type="entry name" value="CALM/Myosin/TropC-like"/>
</dbReference>
<dbReference type="InterPro" id="IPR011992">
    <property type="entry name" value="EF-hand-dom_pair"/>
</dbReference>
<dbReference type="InterPro" id="IPR002048">
    <property type="entry name" value="EF_hand_dom"/>
</dbReference>
<dbReference type="PANTHER" id="PTHR23048">
    <property type="entry name" value="MYOSIN LIGHT CHAIN 1, 3"/>
    <property type="match status" value="1"/>
</dbReference>
<dbReference type="PANTHER" id="PTHR23048:SF43">
    <property type="entry name" value="MYOSIN LIGHT POLYPEPTIDE 6"/>
    <property type="match status" value="1"/>
</dbReference>
<dbReference type="SMART" id="SM00054">
    <property type="entry name" value="EFh"/>
    <property type="match status" value="2"/>
</dbReference>
<dbReference type="SUPFAM" id="SSF47473">
    <property type="entry name" value="EF-hand"/>
    <property type="match status" value="1"/>
</dbReference>
<dbReference type="PROSITE" id="PS50222">
    <property type="entry name" value="EF_HAND_2"/>
    <property type="match status" value="2"/>
</dbReference>
<sequence>MCDFTEDQTAEFKEAFQLFDRTGDGKILYSQCGDVMRALGQNPTNAEVLKVLGNPKSDEMNVKVLDFEHFLPMLQTVAKNKDQGTYEDYVEGLRVFDKEGNGTVMGAEIRHVLVTLGEKMTEEEVEMLVAGHEDSNGCINYEAFVRHILSG</sequence>
<evidence type="ECO:0000250" key="1">
    <source>
        <dbReference type="UniProtKB" id="P60660"/>
    </source>
</evidence>
<evidence type="ECO:0000250" key="2">
    <source>
        <dbReference type="UniProtKB" id="Q60605"/>
    </source>
</evidence>
<evidence type="ECO:0000255" key="3">
    <source>
        <dbReference type="PROSITE-ProRule" id="PRU00448"/>
    </source>
</evidence>
<evidence type="ECO:0000303" key="4">
    <source>
    </source>
</evidence>
<evidence type="ECO:0000303" key="5">
    <source ref="2"/>
</evidence>
<reference key="1">
    <citation type="journal article" date="1990" name="Nucleic Acids Res.">
        <title>Nucleotide and deduced amino acid sequence of cDNAs encoding two isoforms for the 17,000 dalton myosin light chain in bovine aortic smooth muscle.</title>
        <authorList>
            <person name="Lash J.A."/>
            <person name="Helper D.J."/>
            <person name="Klug M."/>
            <person name="Nicolozakes A.W."/>
            <person name="Hathaway D.R."/>
        </authorList>
    </citation>
    <scope>NUCLEOTIDE SEQUENCE [MRNA] (ISOFORMS NON-MUSCLE AND SMOOTH MUSCLE)</scope>
    <source>
        <tissue>Aorta</tissue>
    </source>
</reference>
<reference key="2">
    <citation type="submission" date="2007-06" db="EMBL/GenBank/DDBJ databases">
        <authorList>
            <consortium name="NIH - Mammalian Gene Collection (MGC) project"/>
        </authorList>
    </citation>
    <scope>NUCLEOTIDE SEQUENCE [LARGE SCALE MRNA] (ISOFORMS NON-MUSCLE AND SMOOTH MUSCLE)</scope>
    <source>
        <strain>Hereford</strain>
        <tissue>Fetal spinal cord</tissue>
        <tissue>Testis</tissue>
    </source>
</reference>
<protein>
    <recommendedName>
        <fullName>Myosin light polypeptide 6</fullName>
    </recommendedName>
    <alternativeName>
        <fullName>17 kDa myosin light chain</fullName>
        <shortName>LC17</shortName>
    </alternativeName>
    <alternativeName>
        <fullName>Myosin light chain 3</fullName>
        <shortName>MLC-3</shortName>
    </alternativeName>
    <alternativeName>
        <fullName>Myosin light chain alkali 3</fullName>
        <shortName>Myosin light chain A3</shortName>
    </alternativeName>
</protein>
<comment type="function">
    <text>Regulatory light chain of myosin. Does not bind calcium.</text>
</comment>
<comment type="subunit">
    <text evidence="2">Myosin is a hexamer of 2 heavy chains and 4 light chains. Interacts with SPATA6.</text>
</comment>
<comment type="alternative products">
    <event type="alternative splicing"/>
    <isoform>
        <id>P60661-1</id>
        <id>P16475-1</id>
        <name>Non-muscle</name>
        <name>MLC3nm</name>
        <name>LC17A</name>
        <name>LC17-nm</name>
        <sequence type="displayed"/>
    </isoform>
    <isoform>
        <id>P60661-2</id>
        <id>P24572-1</id>
        <name>Smooth muscle</name>
        <name>MLC3sm</name>
        <name>LC17B</name>
        <name>LC17-sm</name>
        <sequence type="described" ref="VSP_009734"/>
    </isoform>
</comment>
<name>MYL6_BOVIN</name>
<feature type="initiator methionine" description="Removed" evidence="1">
    <location>
        <position position="1"/>
    </location>
</feature>
<feature type="chain" id="PRO_0000198689" description="Myosin light polypeptide 6">
    <location>
        <begin position="2"/>
        <end position="151"/>
    </location>
</feature>
<feature type="domain" description="EF-hand 1" evidence="3">
    <location>
        <begin position="7"/>
        <end position="42"/>
    </location>
</feature>
<feature type="domain" description="EF-hand 2" evidence="3">
    <location>
        <begin position="84"/>
        <end position="119"/>
    </location>
</feature>
<feature type="modified residue" description="N-acetylcysteine" evidence="1">
    <location>
        <position position="2"/>
    </location>
</feature>
<feature type="modified residue" description="Phosphoserine" evidence="1">
    <location>
        <position position="57"/>
    </location>
</feature>
<feature type="modified residue" description="N6-acetyllysine" evidence="1">
    <location>
        <position position="81"/>
    </location>
</feature>
<feature type="splice variant" id="VSP_009734" description="In isoform Smooth muscle." evidence="4 5">
    <original>AFVRHILSG</original>
    <variation>ELVRMVLNG</variation>
    <location>
        <begin position="143"/>
        <end position="151"/>
    </location>
</feature>
<organism>
    <name type="scientific">Bos taurus</name>
    <name type="common">Bovine</name>
    <dbReference type="NCBI Taxonomy" id="9913"/>
    <lineage>
        <taxon>Eukaryota</taxon>
        <taxon>Metazoa</taxon>
        <taxon>Chordata</taxon>
        <taxon>Craniata</taxon>
        <taxon>Vertebrata</taxon>
        <taxon>Euteleostomi</taxon>
        <taxon>Mammalia</taxon>
        <taxon>Eutheria</taxon>
        <taxon>Laurasiatheria</taxon>
        <taxon>Artiodactyla</taxon>
        <taxon>Ruminantia</taxon>
        <taxon>Pecora</taxon>
        <taxon>Bovidae</taxon>
        <taxon>Bovinae</taxon>
        <taxon>Bos</taxon>
    </lineage>
</organism>